<name>MURG_SYNJA</name>
<reference key="1">
    <citation type="journal article" date="2007" name="ISME J.">
        <title>Population level functional diversity in a microbial community revealed by comparative genomic and metagenomic analyses.</title>
        <authorList>
            <person name="Bhaya D."/>
            <person name="Grossman A.R."/>
            <person name="Steunou A.-S."/>
            <person name="Khuri N."/>
            <person name="Cohan F.M."/>
            <person name="Hamamura N."/>
            <person name="Melendrez M.C."/>
            <person name="Bateson M.M."/>
            <person name="Ward D.M."/>
            <person name="Heidelberg J.F."/>
        </authorList>
    </citation>
    <scope>NUCLEOTIDE SEQUENCE [LARGE SCALE GENOMIC DNA]</scope>
    <source>
        <strain>JA-3-3Ab</strain>
    </source>
</reference>
<keyword id="KW-0131">Cell cycle</keyword>
<keyword id="KW-0132">Cell division</keyword>
<keyword id="KW-0997">Cell inner membrane</keyword>
<keyword id="KW-1003">Cell membrane</keyword>
<keyword id="KW-0133">Cell shape</keyword>
<keyword id="KW-0961">Cell wall biogenesis/degradation</keyword>
<keyword id="KW-0328">Glycosyltransferase</keyword>
<keyword id="KW-0472">Membrane</keyword>
<keyword id="KW-0573">Peptidoglycan synthesis</keyword>
<keyword id="KW-0808">Transferase</keyword>
<organism>
    <name type="scientific">Synechococcus sp. (strain JA-3-3Ab)</name>
    <name type="common">Cyanobacteria bacterium Yellowstone A-Prime</name>
    <dbReference type="NCBI Taxonomy" id="321327"/>
    <lineage>
        <taxon>Bacteria</taxon>
        <taxon>Bacillati</taxon>
        <taxon>Cyanobacteriota</taxon>
        <taxon>Cyanophyceae</taxon>
        <taxon>Synechococcales</taxon>
        <taxon>Synechococcaceae</taxon>
        <taxon>Synechococcus</taxon>
    </lineage>
</organism>
<protein>
    <recommendedName>
        <fullName evidence="1">UDP-N-acetylglucosamine--N-acetylmuramyl-(pentapeptide) pyrophosphoryl-undecaprenol N-acetylglucosamine transferase</fullName>
        <ecNumber evidence="1">2.4.1.227</ecNumber>
    </recommendedName>
    <alternativeName>
        <fullName evidence="1">Undecaprenyl-PP-MurNAc-pentapeptide-UDPGlcNAc GlcNAc transferase</fullName>
    </alternativeName>
</protein>
<feature type="chain" id="PRO_0000315190" description="UDP-N-acetylglucosamine--N-acetylmuramyl-(pentapeptide) pyrophosphoryl-undecaprenol N-acetylglucosamine transferase">
    <location>
        <begin position="1"/>
        <end position="362"/>
    </location>
</feature>
<feature type="binding site" evidence="1">
    <location>
        <begin position="21"/>
        <end position="23"/>
    </location>
    <ligand>
        <name>UDP-N-acetyl-alpha-D-glucosamine</name>
        <dbReference type="ChEBI" id="CHEBI:57705"/>
    </ligand>
</feature>
<feature type="binding site" evidence="1">
    <location>
        <position position="129"/>
    </location>
    <ligand>
        <name>UDP-N-acetyl-alpha-D-glucosamine</name>
        <dbReference type="ChEBI" id="CHEBI:57705"/>
    </ligand>
</feature>
<feature type="binding site" evidence="1">
    <location>
        <position position="170"/>
    </location>
    <ligand>
        <name>UDP-N-acetyl-alpha-D-glucosamine</name>
        <dbReference type="ChEBI" id="CHEBI:57705"/>
    </ligand>
</feature>
<feature type="binding site" evidence="1">
    <location>
        <position position="198"/>
    </location>
    <ligand>
        <name>UDP-N-acetyl-alpha-D-glucosamine</name>
        <dbReference type="ChEBI" id="CHEBI:57705"/>
    </ligand>
</feature>
<feature type="binding site" evidence="1">
    <location>
        <position position="290"/>
    </location>
    <ligand>
        <name>UDP-N-acetyl-alpha-D-glucosamine</name>
        <dbReference type="ChEBI" id="CHEBI:57705"/>
    </ligand>
</feature>
<sequence length="362" mass="38671">MNGDRRDPTSPPRLLVAASGTGGHIFPALAVVEQLPTWQIEWLGVPQRLEAKLVPDRYPLHRVAMSGWQGSPWQKLGSLVQLARATLQVRQILASGQFDVVLTTGGYIAAPTILAARSLGVPVLLHESNCLPGKVTRWLGRFCRLVALGMAETAEHLPGAVTRVVGTPVRAEFYQPQPLPADLPIPEGDPLIVVMGGSQGARGLNRLVAACAPAWLEAGAWIVHLTGGSEVGIPSHPRYRAFPFRADVAALLQRATFAISRAGALSLAELWATATPAILIPYPFAAEDHQYHNALAFVGRGGGVVMRESEANLDLLRQTALAWLAQPQVVAQMAANLKATAPPAASKAVARLLQEICRDSAR</sequence>
<evidence type="ECO:0000255" key="1">
    <source>
        <dbReference type="HAMAP-Rule" id="MF_00033"/>
    </source>
</evidence>
<gene>
    <name evidence="1" type="primary">murG</name>
    <name type="ordered locus">CYA_0847</name>
</gene>
<proteinExistence type="inferred from homology"/>
<dbReference type="EC" id="2.4.1.227" evidence="1"/>
<dbReference type="EMBL" id="CP000239">
    <property type="protein sequence ID" value="ABC99051.1"/>
    <property type="molecule type" value="Genomic_DNA"/>
</dbReference>
<dbReference type="RefSeq" id="WP_011429735.1">
    <property type="nucleotide sequence ID" value="NC_007775.1"/>
</dbReference>
<dbReference type="SMR" id="Q2JW21"/>
<dbReference type="STRING" id="321327.CYA_0847"/>
<dbReference type="CAZy" id="GT28">
    <property type="family name" value="Glycosyltransferase Family 28"/>
</dbReference>
<dbReference type="KEGG" id="cya:CYA_0847"/>
<dbReference type="eggNOG" id="COG0707">
    <property type="taxonomic scope" value="Bacteria"/>
</dbReference>
<dbReference type="HOGENOM" id="CLU_037404_0_0_3"/>
<dbReference type="OrthoDB" id="9808936at2"/>
<dbReference type="UniPathway" id="UPA00219"/>
<dbReference type="Proteomes" id="UP000008818">
    <property type="component" value="Chromosome"/>
</dbReference>
<dbReference type="GO" id="GO:0005886">
    <property type="term" value="C:plasma membrane"/>
    <property type="evidence" value="ECO:0007669"/>
    <property type="project" value="UniProtKB-SubCell"/>
</dbReference>
<dbReference type="GO" id="GO:0051991">
    <property type="term" value="F:UDP-N-acetyl-D-glucosamine:N-acetylmuramoyl-L-alanyl-D-glutamyl-meso-2,6-diaminopimelyl-D-alanyl-D-alanine-diphosphoundecaprenol 4-beta-N-acetylglucosaminlytransferase activity"/>
    <property type="evidence" value="ECO:0007669"/>
    <property type="project" value="RHEA"/>
</dbReference>
<dbReference type="GO" id="GO:0050511">
    <property type="term" value="F:undecaprenyldiphospho-muramoylpentapeptide beta-N-acetylglucosaminyltransferase activity"/>
    <property type="evidence" value="ECO:0007669"/>
    <property type="project" value="UniProtKB-UniRule"/>
</dbReference>
<dbReference type="GO" id="GO:0005975">
    <property type="term" value="P:carbohydrate metabolic process"/>
    <property type="evidence" value="ECO:0007669"/>
    <property type="project" value="InterPro"/>
</dbReference>
<dbReference type="GO" id="GO:0051301">
    <property type="term" value="P:cell division"/>
    <property type="evidence" value="ECO:0007669"/>
    <property type="project" value="UniProtKB-KW"/>
</dbReference>
<dbReference type="GO" id="GO:0071555">
    <property type="term" value="P:cell wall organization"/>
    <property type="evidence" value="ECO:0007669"/>
    <property type="project" value="UniProtKB-KW"/>
</dbReference>
<dbReference type="GO" id="GO:0030259">
    <property type="term" value="P:lipid glycosylation"/>
    <property type="evidence" value="ECO:0007669"/>
    <property type="project" value="UniProtKB-UniRule"/>
</dbReference>
<dbReference type="GO" id="GO:0009252">
    <property type="term" value="P:peptidoglycan biosynthetic process"/>
    <property type="evidence" value="ECO:0007669"/>
    <property type="project" value="UniProtKB-UniRule"/>
</dbReference>
<dbReference type="GO" id="GO:0008360">
    <property type="term" value="P:regulation of cell shape"/>
    <property type="evidence" value="ECO:0007669"/>
    <property type="project" value="UniProtKB-KW"/>
</dbReference>
<dbReference type="CDD" id="cd03785">
    <property type="entry name" value="GT28_MurG"/>
    <property type="match status" value="1"/>
</dbReference>
<dbReference type="Gene3D" id="3.40.50.2000">
    <property type="entry name" value="Glycogen Phosphorylase B"/>
    <property type="match status" value="2"/>
</dbReference>
<dbReference type="HAMAP" id="MF_00033">
    <property type="entry name" value="MurG"/>
    <property type="match status" value="1"/>
</dbReference>
<dbReference type="InterPro" id="IPR006009">
    <property type="entry name" value="GlcNAc_MurG"/>
</dbReference>
<dbReference type="InterPro" id="IPR007235">
    <property type="entry name" value="Glyco_trans_28_C"/>
</dbReference>
<dbReference type="InterPro" id="IPR004276">
    <property type="entry name" value="GlycoTrans_28_N"/>
</dbReference>
<dbReference type="NCBIfam" id="TIGR01133">
    <property type="entry name" value="murG"/>
    <property type="match status" value="1"/>
</dbReference>
<dbReference type="PANTHER" id="PTHR21015:SF22">
    <property type="entry name" value="GLYCOSYLTRANSFERASE"/>
    <property type="match status" value="1"/>
</dbReference>
<dbReference type="PANTHER" id="PTHR21015">
    <property type="entry name" value="UDP-N-ACETYLGLUCOSAMINE--N-ACETYLMURAMYL-(PENTAPEPTIDE) PYROPHOSPHORYL-UNDECAPRENOL N-ACETYLGLUCOSAMINE TRANSFERASE 1"/>
    <property type="match status" value="1"/>
</dbReference>
<dbReference type="Pfam" id="PF04101">
    <property type="entry name" value="Glyco_tran_28_C"/>
    <property type="match status" value="1"/>
</dbReference>
<dbReference type="Pfam" id="PF03033">
    <property type="entry name" value="Glyco_transf_28"/>
    <property type="match status" value="1"/>
</dbReference>
<dbReference type="SUPFAM" id="SSF53756">
    <property type="entry name" value="UDP-Glycosyltransferase/glycogen phosphorylase"/>
    <property type="match status" value="1"/>
</dbReference>
<comment type="function">
    <text evidence="1">Cell wall formation. Catalyzes the transfer of a GlcNAc subunit on undecaprenyl-pyrophosphoryl-MurNAc-pentapeptide (lipid intermediate I) to form undecaprenyl-pyrophosphoryl-MurNAc-(pentapeptide)GlcNAc (lipid intermediate II).</text>
</comment>
<comment type="catalytic activity">
    <reaction evidence="1">
        <text>di-trans,octa-cis-undecaprenyl diphospho-N-acetyl-alpha-D-muramoyl-L-alanyl-D-glutamyl-meso-2,6-diaminopimeloyl-D-alanyl-D-alanine + UDP-N-acetyl-alpha-D-glucosamine = di-trans,octa-cis-undecaprenyl diphospho-[N-acetyl-alpha-D-glucosaminyl-(1-&gt;4)]-N-acetyl-alpha-D-muramoyl-L-alanyl-D-glutamyl-meso-2,6-diaminopimeloyl-D-alanyl-D-alanine + UDP + H(+)</text>
        <dbReference type="Rhea" id="RHEA:31227"/>
        <dbReference type="ChEBI" id="CHEBI:15378"/>
        <dbReference type="ChEBI" id="CHEBI:57705"/>
        <dbReference type="ChEBI" id="CHEBI:58223"/>
        <dbReference type="ChEBI" id="CHEBI:61387"/>
        <dbReference type="ChEBI" id="CHEBI:61388"/>
        <dbReference type="EC" id="2.4.1.227"/>
    </reaction>
</comment>
<comment type="pathway">
    <text evidence="1">Cell wall biogenesis; peptidoglycan biosynthesis.</text>
</comment>
<comment type="subcellular location">
    <subcellularLocation>
        <location evidence="1">Cell inner membrane</location>
        <topology evidence="1">Peripheral membrane protein</topology>
        <orientation evidence="1">Cytoplasmic side</orientation>
    </subcellularLocation>
</comment>
<comment type="similarity">
    <text evidence="1">Belongs to the glycosyltransferase 28 family. MurG subfamily.</text>
</comment>
<accession>Q2JW21</accession>